<proteinExistence type="inferred from homology"/>
<protein>
    <recommendedName>
        <fullName evidence="1">ATP synthase epsilon chain</fullName>
    </recommendedName>
    <alternativeName>
        <fullName evidence="1">ATP synthase F1 sector epsilon subunit</fullName>
    </alternativeName>
    <alternativeName>
        <fullName evidence="1">F-ATPase epsilon subunit</fullName>
    </alternativeName>
</protein>
<sequence>MAMTVHCDIVSAEGEIFSGLVEMVVAHGNLGDLGIAPGHAPLITNLKPGPITLTKQGGAQEVFYISGGFLEVQPNMVKVLADTVQRATDLDEAQAQEALKAAENALNLKGADFDYSAAAARLAEAAAQLRTVQQMRKGK</sequence>
<gene>
    <name evidence="1" type="primary">atpC</name>
    <name type="ordered locus">Pput_5294</name>
</gene>
<organism>
    <name type="scientific">Pseudomonas putida (strain ATCC 700007 / DSM 6899 / JCM 31910 / BCRC 17059 / LMG 24140 / F1)</name>
    <dbReference type="NCBI Taxonomy" id="351746"/>
    <lineage>
        <taxon>Bacteria</taxon>
        <taxon>Pseudomonadati</taxon>
        <taxon>Pseudomonadota</taxon>
        <taxon>Gammaproteobacteria</taxon>
        <taxon>Pseudomonadales</taxon>
        <taxon>Pseudomonadaceae</taxon>
        <taxon>Pseudomonas</taxon>
    </lineage>
</organism>
<accession>A5WBA2</accession>
<feature type="chain" id="PRO_1000060984" description="ATP synthase epsilon chain">
    <location>
        <begin position="1"/>
        <end position="139"/>
    </location>
</feature>
<evidence type="ECO:0000255" key="1">
    <source>
        <dbReference type="HAMAP-Rule" id="MF_00530"/>
    </source>
</evidence>
<dbReference type="EMBL" id="CP000712">
    <property type="protein sequence ID" value="ABQ81412.1"/>
    <property type="molecule type" value="Genomic_DNA"/>
</dbReference>
<dbReference type="SMR" id="A5WBA2"/>
<dbReference type="KEGG" id="ppf:Pput_5294"/>
<dbReference type="eggNOG" id="COG0355">
    <property type="taxonomic scope" value="Bacteria"/>
</dbReference>
<dbReference type="HOGENOM" id="CLU_084338_2_0_6"/>
<dbReference type="GO" id="GO:0005886">
    <property type="term" value="C:plasma membrane"/>
    <property type="evidence" value="ECO:0007669"/>
    <property type="project" value="UniProtKB-SubCell"/>
</dbReference>
<dbReference type="GO" id="GO:0045259">
    <property type="term" value="C:proton-transporting ATP synthase complex"/>
    <property type="evidence" value="ECO:0007669"/>
    <property type="project" value="UniProtKB-KW"/>
</dbReference>
<dbReference type="GO" id="GO:0005524">
    <property type="term" value="F:ATP binding"/>
    <property type="evidence" value="ECO:0007669"/>
    <property type="project" value="UniProtKB-UniRule"/>
</dbReference>
<dbReference type="GO" id="GO:0046933">
    <property type="term" value="F:proton-transporting ATP synthase activity, rotational mechanism"/>
    <property type="evidence" value="ECO:0007669"/>
    <property type="project" value="UniProtKB-UniRule"/>
</dbReference>
<dbReference type="CDD" id="cd12152">
    <property type="entry name" value="F1-ATPase_delta"/>
    <property type="match status" value="1"/>
</dbReference>
<dbReference type="FunFam" id="2.60.15.10:FF:000001">
    <property type="entry name" value="ATP synthase epsilon chain"/>
    <property type="match status" value="1"/>
</dbReference>
<dbReference type="Gene3D" id="1.20.5.440">
    <property type="entry name" value="ATP synthase delta/epsilon subunit, C-terminal domain"/>
    <property type="match status" value="1"/>
</dbReference>
<dbReference type="Gene3D" id="2.60.15.10">
    <property type="entry name" value="F0F1 ATP synthase delta/epsilon subunit, N-terminal"/>
    <property type="match status" value="1"/>
</dbReference>
<dbReference type="HAMAP" id="MF_00530">
    <property type="entry name" value="ATP_synth_epsil_bac"/>
    <property type="match status" value="1"/>
</dbReference>
<dbReference type="InterPro" id="IPR036794">
    <property type="entry name" value="ATP_F1_dsu/esu_C_sf"/>
</dbReference>
<dbReference type="InterPro" id="IPR001469">
    <property type="entry name" value="ATP_synth_F1_dsu/esu"/>
</dbReference>
<dbReference type="InterPro" id="IPR020546">
    <property type="entry name" value="ATP_synth_F1_dsu/esu_N"/>
</dbReference>
<dbReference type="InterPro" id="IPR020547">
    <property type="entry name" value="ATP_synth_F1_esu_C"/>
</dbReference>
<dbReference type="InterPro" id="IPR036771">
    <property type="entry name" value="ATPsynth_dsu/esu_N"/>
</dbReference>
<dbReference type="NCBIfam" id="TIGR01216">
    <property type="entry name" value="ATP_synt_epsi"/>
    <property type="match status" value="1"/>
</dbReference>
<dbReference type="NCBIfam" id="NF001847">
    <property type="entry name" value="PRK00571.1-4"/>
    <property type="match status" value="1"/>
</dbReference>
<dbReference type="PANTHER" id="PTHR13822">
    <property type="entry name" value="ATP SYNTHASE DELTA/EPSILON CHAIN"/>
    <property type="match status" value="1"/>
</dbReference>
<dbReference type="PANTHER" id="PTHR13822:SF10">
    <property type="entry name" value="ATP SYNTHASE EPSILON CHAIN, CHLOROPLASTIC"/>
    <property type="match status" value="1"/>
</dbReference>
<dbReference type="Pfam" id="PF00401">
    <property type="entry name" value="ATP-synt_DE"/>
    <property type="match status" value="1"/>
</dbReference>
<dbReference type="Pfam" id="PF02823">
    <property type="entry name" value="ATP-synt_DE_N"/>
    <property type="match status" value="1"/>
</dbReference>
<dbReference type="SUPFAM" id="SSF46604">
    <property type="entry name" value="Epsilon subunit of F1F0-ATP synthase C-terminal domain"/>
    <property type="match status" value="1"/>
</dbReference>
<dbReference type="SUPFAM" id="SSF51344">
    <property type="entry name" value="Epsilon subunit of F1F0-ATP synthase N-terminal domain"/>
    <property type="match status" value="1"/>
</dbReference>
<keyword id="KW-0066">ATP synthesis</keyword>
<keyword id="KW-0997">Cell inner membrane</keyword>
<keyword id="KW-1003">Cell membrane</keyword>
<keyword id="KW-0139">CF(1)</keyword>
<keyword id="KW-0375">Hydrogen ion transport</keyword>
<keyword id="KW-0406">Ion transport</keyword>
<keyword id="KW-0472">Membrane</keyword>
<keyword id="KW-0813">Transport</keyword>
<comment type="function">
    <text evidence="1">Produces ATP from ADP in the presence of a proton gradient across the membrane.</text>
</comment>
<comment type="subunit">
    <text evidence="1">F-type ATPases have 2 components, CF(1) - the catalytic core - and CF(0) - the membrane proton channel. CF(1) has five subunits: alpha(3), beta(3), gamma(1), delta(1), epsilon(1). CF(0) has three main subunits: a, b and c.</text>
</comment>
<comment type="subcellular location">
    <subcellularLocation>
        <location evidence="1">Cell inner membrane</location>
        <topology evidence="1">Peripheral membrane protein</topology>
    </subcellularLocation>
</comment>
<comment type="similarity">
    <text evidence="1">Belongs to the ATPase epsilon chain family.</text>
</comment>
<reference key="1">
    <citation type="submission" date="2007-05" db="EMBL/GenBank/DDBJ databases">
        <title>Complete sequence of Pseudomonas putida F1.</title>
        <authorList>
            <consortium name="US DOE Joint Genome Institute"/>
            <person name="Copeland A."/>
            <person name="Lucas S."/>
            <person name="Lapidus A."/>
            <person name="Barry K."/>
            <person name="Detter J.C."/>
            <person name="Glavina del Rio T."/>
            <person name="Hammon N."/>
            <person name="Israni S."/>
            <person name="Dalin E."/>
            <person name="Tice H."/>
            <person name="Pitluck S."/>
            <person name="Chain P."/>
            <person name="Malfatti S."/>
            <person name="Shin M."/>
            <person name="Vergez L."/>
            <person name="Schmutz J."/>
            <person name="Larimer F."/>
            <person name="Land M."/>
            <person name="Hauser L."/>
            <person name="Kyrpides N."/>
            <person name="Lykidis A."/>
            <person name="Parales R."/>
            <person name="Richardson P."/>
        </authorList>
    </citation>
    <scope>NUCLEOTIDE SEQUENCE [LARGE SCALE GENOMIC DNA]</scope>
    <source>
        <strain>ATCC 700007 / DSM 6899 / JCM 31910 / BCRC 17059 / LMG 24140 / F1</strain>
    </source>
</reference>
<name>ATPE_PSEP1</name>